<keyword id="KW-0238">DNA-binding</keyword>
<keyword id="KW-0539">Nucleus</keyword>
<keyword id="KW-1185">Reference proteome</keyword>
<keyword id="KW-0804">Transcription</keyword>
<keyword id="KW-0805">Transcription regulation</keyword>
<dbReference type="EMBL" id="AY940680">
    <property type="protein sequence ID" value="AAY24683.1"/>
    <property type="molecule type" value="mRNA"/>
</dbReference>
<dbReference type="RefSeq" id="NP_001105837.1">
    <property type="nucleotide sequence ID" value="NM_001112367.1"/>
</dbReference>
<dbReference type="RefSeq" id="XP_008649271.1">
    <property type="nucleotide sequence ID" value="XM_008651049.3"/>
</dbReference>
<dbReference type="SMR" id="Q32SG4"/>
<dbReference type="FunCoup" id="Q32SG4">
    <property type="interactions" value="32"/>
</dbReference>
<dbReference type="IntAct" id="Q32SG4">
    <property type="interactions" value="1"/>
</dbReference>
<dbReference type="STRING" id="4577.Q32SG4"/>
<dbReference type="PaxDb" id="4577-GRMZM2G018487_P01"/>
<dbReference type="EnsemblPlants" id="Zm00001eb056780_T001">
    <property type="protein sequence ID" value="Zm00001eb056780_P001"/>
    <property type="gene ID" value="Zm00001eb056780"/>
</dbReference>
<dbReference type="EnsemblPlants" id="Zm00001eb056780_T002">
    <property type="protein sequence ID" value="Zm00001eb056780_P002"/>
    <property type="gene ID" value="Zm00001eb056780"/>
</dbReference>
<dbReference type="EnsemblPlants" id="Zm00001eb056780_T003">
    <property type="protein sequence ID" value="Zm00001eb056780_P003"/>
    <property type="gene ID" value="Zm00001eb056780"/>
</dbReference>
<dbReference type="GeneID" id="732738"/>
<dbReference type="Gramene" id="Zm00001eb056780_T001">
    <property type="protein sequence ID" value="Zm00001eb056780_P001"/>
    <property type="gene ID" value="Zm00001eb056780"/>
</dbReference>
<dbReference type="Gramene" id="Zm00001eb056780_T002">
    <property type="protein sequence ID" value="Zm00001eb056780_P002"/>
    <property type="gene ID" value="Zm00001eb056780"/>
</dbReference>
<dbReference type="Gramene" id="Zm00001eb056780_T003">
    <property type="protein sequence ID" value="Zm00001eb056780_P003"/>
    <property type="gene ID" value="Zm00001eb056780"/>
</dbReference>
<dbReference type="KEGG" id="zma:732738"/>
<dbReference type="eggNOG" id="ENOG502QPQX">
    <property type="taxonomic scope" value="Eukaryota"/>
</dbReference>
<dbReference type="HOGENOM" id="CLU_040478_0_0_1"/>
<dbReference type="InParanoid" id="Q32SG4"/>
<dbReference type="OMA" id="MQRRRCT"/>
<dbReference type="OrthoDB" id="1918969at2759"/>
<dbReference type="Proteomes" id="UP000007305">
    <property type="component" value="Chromosome 1"/>
</dbReference>
<dbReference type="ExpressionAtlas" id="Q32SG4">
    <property type="expression patterns" value="baseline and differential"/>
</dbReference>
<dbReference type="GO" id="GO:0005634">
    <property type="term" value="C:nucleus"/>
    <property type="evidence" value="ECO:0007669"/>
    <property type="project" value="UniProtKB-SubCell"/>
</dbReference>
<dbReference type="GO" id="GO:0003700">
    <property type="term" value="F:DNA-binding transcription factor activity"/>
    <property type="evidence" value="ECO:0007669"/>
    <property type="project" value="InterPro"/>
</dbReference>
<dbReference type="GO" id="GO:0043565">
    <property type="term" value="F:sequence-specific DNA binding"/>
    <property type="evidence" value="ECO:0007669"/>
    <property type="project" value="InterPro"/>
</dbReference>
<dbReference type="FunFam" id="2.20.25.80:FF:000004">
    <property type="entry name" value="WRKY transcription factor 65"/>
    <property type="match status" value="1"/>
</dbReference>
<dbReference type="Gene3D" id="2.20.25.80">
    <property type="entry name" value="WRKY domain"/>
    <property type="match status" value="1"/>
</dbReference>
<dbReference type="InterPro" id="IPR003657">
    <property type="entry name" value="WRKY_dom"/>
</dbReference>
<dbReference type="InterPro" id="IPR036576">
    <property type="entry name" value="WRKY_dom_sf"/>
</dbReference>
<dbReference type="InterPro" id="IPR044810">
    <property type="entry name" value="WRKY_plant"/>
</dbReference>
<dbReference type="InterPro" id="IPR018872">
    <property type="entry name" value="Zn-cluster-dom"/>
</dbReference>
<dbReference type="PANTHER" id="PTHR31282">
    <property type="entry name" value="WRKY TRANSCRIPTION FACTOR 21-RELATED"/>
    <property type="match status" value="1"/>
</dbReference>
<dbReference type="Pfam" id="PF10533">
    <property type="entry name" value="Plant_zn_clust"/>
    <property type="match status" value="1"/>
</dbReference>
<dbReference type="Pfam" id="PF03106">
    <property type="entry name" value="WRKY"/>
    <property type="match status" value="1"/>
</dbReference>
<dbReference type="SMART" id="SM00774">
    <property type="entry name" value="WRKY"/>
    <property type="match status" value="1"/>
</dbReference>
<dbReference type="SUPFAM" id="SSF118290">
    <property type="entry name" value="WRKY DNA-binding domain"/>
    <property type="match status" value="1"/>
</dbReference>
<dbReference type="PROSITE" id="PS50811">
    <property type="entry name" value="WRKY"/>
    <property type="match status" value="1"/>
</dbReference>
<protein>
    <recommendedName>
        <fullName>Protein WRKY1</fullName>
    </recommendedName>
    <alternativeName>
        <fullName>WRKY DNA-binding protein 1</fullName>
    </alternativeName>
</protein>
<accession>Q32SG4</accession>
<name>WRKY1_MAIZE</name>
<sequence>MEGMEEANRTAVESCHRVLALLSNPHGQLVPSKELVAATGEAVAKFGSLTAKLSNSNGDGLLQGHARVRKVKKPLHIFDSNLFLESSAVAAAAAPAKTPSPSPILGLQLFPRYHQFEGSSSKDPVRIPTQFPKRLLLEKPTAGMEGSTSQSPPIVQMVQPVSVAPPAGTPTPALPPAHLHFIQQQQSYQRFQLMQQMKIQSEMMKRSNLGDQGGSLSGGGGGGRKGVNLKFDSSNCTASSSRSFLSSLSMEGSLASLDGSRTSRPFQLLSGSQTASTPELGLVQRRRCAGREDGTGRCATGSRCHCSKKRKLRIRRSIKVPAISNKVADIPADEFSWRKYGQKPIKGSPHPRGYYKCSSVRGCPARKHVERCVDDPSMLIVTYEGDHNHNRVLAQPA</sequence>
<organism>
    <name type="scientific">Zea mays</name>
    <name type="common">Maize</name>
    <dbReference type="NCBI Taxonomy" id="4577"/>
    <lineage>
        <taxon>Eukaryota</taxon>
        <taxon>Viridiplantae</taxon>
        <taxon>Streptophyta</taxon>
        <taxon>Embryophyta</taxon>
        <taxon>Tracheophyta</taxon>
        <taxon>Spermatophyta</taxon>
        <taxon>Magnoliopsida</taxon>
        <taxon>Liliopsida</taxon>
        <taxon>Poales</taxon>
        <taxon>Poaceae</taxon>
        <taxon>PACMAD clade</taxon>
        <taxon>Panicoideae</taxon>
        <taxon>Andropogonodae</taxon>
        <taxon>Andropogoneae</taxon>
        <taxon>Tripsacinae</taxon>
        <taxon>Zea</taxon>
    </lineage>
</organism>
<evidence type="ECO:0000250" key="1"/>
<evidence type="ECO:0000255" key="2">
    <source>
        <dbReference type="PROSITE-ProRule" id="PRU00223"/>
    </source>
</evidence>
<evidence type="ECO:0000269" key="3">
    <source>
    </source>
</evidence>
<evidence type="ECO:0000305" key="4"/>
<feature type="chain" id="PRO_0000299137" description="Protein WRKY1">
    <location>
        <begin position="1"/>
        <end position="397"/>
    </location>
</feature>
<feature type="DNA-binding region" description="WRKY" evidence="2">
    <location>
        <begin position="326"/>
        <end position="392"/>
    </location>
</feature>
<proteinExistence type="evidence at protein level"/>
<reference key="1">
    <citation type="journal article" date="2005" name="Plant Cell">
        <title>Maize rough sheath2 and its Arabidopsis orthologue ASYMMETRIC LEAVES1 interact with HIRA, a predicted histone chaperone, to maintain knox gene silencing and determinacy during organogenesis.</title>
        <authorList>
            <person name="Phelps-Durr T.L."/>
            <person name="Thomas J."/>
            <person name="Vahab P."/>
            <person name="Timmermans M.C.P."/>
        </authorList>
    </citation>
    <scope>NUCLEOTIDE SEQUENCE [MRNA]</scope>
    <scope>TISSUE SPECIFICITY</scope>
    <scope>INTERACTION WITH RS2</scope>
    <source>
        <strain>cv. B73</strain>
        <tissue>Apices</tissue>
    </source>
</reference>
<comment type="function">
    <text evidence="1">Transcription factor. Interacts specifically with the W box (5'-(T)TGAC[CT]-3'), a frequently occurring elicitor-responsive cis-acting element (By similarity).</text>
</comment>
<comment type="subunit">
    <text evidence="3">Interacts with RS2.</text>
</comment>
<comment type="interaction">
    <interactant intactId="EBI-761253">
        <id>Q32SG4</id>
    </interactant>
    <interactant intactId="EBI-761350">
        <id>Q9S7B2</id>
        <label>RS2</label>
    </interactant>
    <organismsDiffer>false</organismsDiffer>
    <experiments>2</experiments>
</comment>
<comment type="subcellular location">
    <subcellularLocation>
        <location evidence="4">Nucleus</location>
    </subcellularLocation>
</comment>
<comment type="tissue specificity">
    <text evidence="3">More abundant in apices and young leaf primordia than in fully expanded leaf tissues.</text>
</comment>
<comment type="similarity">
    <text evidence="4">Belongs to the WRKY group II-d family.</text>
</comment>